<dbReference type="EMBL" id="CP000720">
    <property type="protein sequence ID" value="ABS48854.1"/>
    <property type="molecule type" value="Genomic_DNA"/>
</dbReference>
<dbReference type="RefSeq" id="WP_002209458.1">
    <property type="nucleotide sequence ID" value="NC_009708.1"/>
</dbReference>
<dbReference type="SMR" id="A7FLQ7"/>
<dbReference type="GeneID" id="96664341"/>
<dbReference type="KEGG" id="ypi:YpsIP31758_3228"/>
<dbReference type="HOGENOM" id="CLU_100590_5_1_6"/>
<dbReference type="Proteomes" id="UP000002412">
    <property type="component" value="Chromosome"/>
</dbReference>
<dbReference type="GO" id="GO:0005737">
    <property type="term" value="C:cytoplasm"/>
    <property type="evidence" value="ECO:0007669"/>
    <property type="project" value="UniProtKB-ARBA"/>
</dbReference>
<dbReference type="GO" id="GO:0015935">
    <property type="term" value="C:small ribosomal subunit"/>
    <property type="evidence" value="ECO:0007669"/>
    <property type="project" value="TreeGrafter"/>
</dbReference>
<dbReference type="GO" id="GO:0003735">
    <property type="term" value="F:structural constituent of ribosome"/>
    <property type="evidence" value="ECO:0007669"/>
    <property type="project" value="InterPro"/>
</dbReference>
<dbReference type="GO" id="GO:0006412">
    <property type="term" value="P:translation"/>
    <property type="evidence" value="ECO:0007669"/>
    <property type="project" value="UniProtKB-UniRule"/>
</dbReference>
<dbReference type="FunFam" id="3.30.1320.10:FF:000001">
    <property type="entry name" value="30S ribosomal protein S16"/>
    <property type="match status" value="1"/>
</dbReference>
<dbReference type="Gene3D" id="3.30.1320.10">
    <property type="match status" value="1"/>
</dbReference>
<dbReference type="HAMAP" id="MF_00385">
    <property type="entry name" value="Ribosomal_bS16"/>
    <property type="match status" value="1"/>
</dbReference>
<dbReference type="InterPro" id="IPR000307">
    <property type="entry name" value="Ribosomal_bS16"/>
</dbReference>
<dbReference type="InterPro" id="IPR020592">
    <property type="entry name" value="Ribosomal_bS16_CS"/>
</dbReference>
<dbReference type="InterPro" id="IPR023803">
    <property type="entry name" value="Ribosomal_bS16_dom_sf"/>
</dbReference>
<dbReference type="NCBIfam" id="TIGR00002">
    <property type="entry name" value="S16"/>
    <property type="match status" value="1"/>
</dbReference>
<dbReference type="PANTHER" id="PTHR12919">
    <property type="entry name" value="30S RIBOSOMAL PROTEIN S16"/>
    <property type="match status" value="1"/>
</dbReference>
<dbReference type="PANTHER" id="PTHR12919:SF20">
    <property type="entry name" value="SMALL RIBOSOMAL SUBUNIT PROTEIN BS16M"/>
    <property type="match status" value="1"/>
</dbReference>
<dbReference type="Pfam" id="PF00886">
    <property type="entry name" value="Ribosomal_S16"/>
    <property type="match status" value="1"/>
</dbReference>
<dbReference type="SUPFAM" id="SSF54565">
    <property type="entry name" value="Ribosomal protein S16"/>
    <property type="match status" value="1"/>
</dbReference>
<dbReference type="PROSITE" id="PS00732">
    <property type="entry name" value="RIBOSOMAL_S16"/>
    <property type="match status" value="1"/>
</dbReference>
<protein>
    <recommendedName>
        <fullName evidence="1">Small ribosomal subunit protein bS16</fullName>
    </recommendedName>
    <alternativeName>
        <fullName evidence="2">30S ribosomal protein S16</fullName>
    </alternativeName>
</protein>
<name>RS16_YERP3</name>
<organism>
    <name type="scientific">Yersinia pseudotuberculosis serotype O:1b (strain IP 31758)</name>
    <dbReference type="NCBI Taxonomy" id="349747"/>
    <lineage>
        <taxon>Bacteria</taxon>
        <taxon>Pseudomonadati</taxon>
        <taxon>Pseudomonadota</taxon>
        <taxon>Gammaproteobacteria</taxon>
        <taxon>Enterobacterales</taxon>
        <taxon>Yersiniaceae</taxon>
        <taxon>Yersinia</taxon>
    </lineage>
</organism>
<accession>A7FLQ7</accession>
<comment type="similarity">
    <text evidence="1">Belongs to the bacterial ribosomal protein bS16 family.</text>
</comment>
<keyword id="KW-0687">Ribonucleoprotein</keyword>
<keyword id="KW-0689">Ribosomal protein</keyword>
<feature type="chain" id="PRO_1000060716" description="Small ribosomal subunit protein bS16">
    <location>
        <begin position="1"/>
        <end position="82"/>
    </location>
</feature>
<evidence type="ECO:0000255" key="1">
    <source>
        <dbReference type="HAMAP-Rule" id="MF_00385"/>
    </source>
</evidence>
<evidence type="ECO:0000305" key="2"/>
<proteinExistence type="inferred from homology"/>
<gene>
    <name evidence="1" type="primary">rpsP</name>
    <name type="ordered locus">YpsIP31758_3228</name>
</gene>
<sequence>MVTIRLARGGAKKRPFYQVVVTDSRNARDGRFIERVGFFNPIASGQAEALRLDLDRIEHWIGLGATVSDRVSVLIKDAKKAA</sequence>
<reference key="1">
    <citation type="journal article" date="2007" name="PLoS Genet.">
        <title>The complete genome sequence of Yersinia pseudotuberculosis IP31758, the causative agent of Far East scarlet-like fever.</title>
        <authorList>
            <person name="Eppinger M."/>
            <person name="Rosovitz M.J."/>
            <person name="Fricke W.F."/>
            <person name="Rasko D.A."/>
            <person name="Kokorina G."/>
            <person name="Fayolle C."/>
            <person name="Lindler L.E."/>
            <person name="Carniel E."/>
            <person name="Ravel J."/>
        </authorList>
    </citation>
    <scope>NUCLEOTIDE SEQUENCE [LARGE SCALE GENOMIC DNA]</scope>
    <source>
        <strain>IP 31758</strain>
    </source>
</reference>